<comment type="catalytic activity">
    <reaction>
        <text>Hydrolysis of terminal non-reducing beta-D-galactose residues in beta-D-galactosides.</text>
        <dbReference type="EC" id="3.2.1.23"/>
    </reaction>
</comment>
<comment type="induction">
    <text>Late in the ABE (acetone, butanol, and ethanol) fermentation and subject to glucose repression.</text>
</comment>
<comment type="similarity">
    <text evidence="2">Belongs to the glycosyl hydrolase 2 family.</text>
</comment>
<protein>
    <recommendedName>
        <fullName>Beta-galactosidase</fullName>
        <shortName>Beta-gal</shortName>
        <ecNumber>3.2.1.23</ecNumber>
    </recommendedName>
    <alternativeName>
        <fullName>Lactase</fullName>
    </alternativeName>
</protein>
<organism>
    <name type="scientific">Clostridium acetobutylicum</name>
    <dbReference type="NCBI Taxonomy" id="1488"/>
    <lineage>
        <taxon>Bacteria</taxon>
        <taxon>Bacillati</taxon>
        <taxon>Bacillota</taxon>
        <taxon>Clostridia</taxon>
        <taxon>Eubacteriales</taxon>
        <taxon>Clostridiaceae</taxon>
        <taxon>Clostridium</taxon>
    </lineage>
</organism>
<evidence type="ECO:0000250" key="1">
    <source>
        <dbReference type="UniProtKB" id="P00722"/>
    </source>
</evidence>
<evidence type="ECO:0000305" key="2"/>
<dbReference type="EC" id="3.2.1.23"/>
<dbReference type="EMBL" id="M35107">
    <property type="protein sequence ID" value="AAA23216.1"/>
    <property type="molecule type" value="Genomic_DNA"/>
</dbReference>
<dbReference type="PIR" id="A39405">
    <property type="entry name" value="A39405"/>
</dbReference>
<dbReference type="SMR" id="P24131"/>
<dbReference type="CAZy" id="GH2">
    <property type="family name" value="Glycoside Hydrolase Family 2"/>
</dbReference>
<dbReference type="GO" id="GO:0009341">
    <property type="term" value="C:beta-galactosidase complex"/>
    <property type="evidence" value="ECO:0007669"/>
    <property type="project" value="InterPro"/>
</dbReference>
<dbReference type="GO" id="GO:0004565">
    <property type="term" value="F:beta-galactosidase activity"/>
    <property type="evidence" value="ECO:0007669"/>
    <property type="project" value="UniProtKB-EC"/>
</dbReference>
<dbReference type="GO" id="GO:0030246">
    <property type="term" value="F:carbohydrate binding"/>
    <property type="evidence" value="ECO:0007669"/>
    <property type="project" value="InterPro"/>
</dbReference>
<dbReference type="GO" id="GO:0005990">
    <property type="term" value="P:lactose catabolic process"/>
    <property type="evidence" value="ECO:0007669"/>
    <property type="project" value="TreeGrafter"/>
</dbReference>
<dbReference type="Gene3D" id="2.70.98.10">
    <property type="match status" value="1"/>
</dbReference>
<dbReference type="Gene3D" id="2.60.120.260">
    <property type="entry name" value="Galactose-binding domain-like"/>
    <property type="match status" value="1"/>
</dbReference>
<dbReference type="Gene3D" id="3.20.20.80">
    <property type="entry name" value="Glycosidases"/>
    <property type="match status" value="1"/>
</dbReference>
<dbReference type="Gene3D" id="2.60.40.10">
    <property type="entry name" value="Immunoglobulins"/>
    <property type="match status" value="2"/>
</dbReference>
<dbReference type="InterPro" id="IPR004199">
    <property type="entry name" value="B-gal_small/dom_5"/>
</dbReference>
<dbReference type="InterPro" id="IPR050347">
    <property type="entry name" value="Bact_Beta-galactosidase"/>
</dbReference>
<dbReference type="InterPro" id="IPR036156">
    <property type="entry name" value="Beta-gal/glucu_dom_sf"/>
</dbReference>
<dbReference type="InterPro" id="IPR011013">
    <property type="entry name" value="Gal_mutarotase_sf_dom"/>
</dbReference>
<dbReference type="InterPro" id="IPR008979">
    <property type="entry name" value="Galactose-bd-like_sf"/>
</dbReference>
<dbReference type="InterPro" id="IPR014718">
    <property type="entry name" value="GH-type_carb-bd"/>
</dbReference>
<dbReference type="InterPro" id="IPR006101">
    <property type="entry name" value="Glyco_hydro_2"/>
</dbReference>
<dbReference type="InterPro" id="IPR023232">
    <property type="entry name" value="Glyco_hydro_2_AS"/>
</dbReference>
<dbReference type="InterPro" id="IPR006103">
    <property type="entry name" value="Glyco_hydro_2_cat"/>
</dbReference>
<dbReference type="InterPro" id="IPR023230">
    <property type="entry name" value="Glyco_hydro_2_CS"/>
</dbReference>
<dbReference type="InterPro" id="IPR006102">
    <property type="entry name" value="Glyco_hydro_2_Ig-like"/>
</dbReference>
<dbReference type="InterPro" id="IPR006104">
    <property type="entry name" value="Glyco_hydro_2_N"/>
</dbReference>
<dbReference type="InterPro" id="IPR017853">
    <property type="entry name" value="Glycoside_hydrolase_SF"/>
</dbReference>
<dbReference type="InterPro" id="IPR013783">
    <property type="entry name" value="Ig-like_fold"/>
</dbReference>
<dbReference type="InterPro" id="IPR032312">
    <property type="entry name" value="LacZ_4"/>
</dbReference>
<dbReference type="PANTHER" id="PTHR46323">
    <property type="entry name" value="BETA-GALACTOSIDASE"/>
    <property type="match status" value="1"/>
</dbReference>
<dbReference type="PANTHER" id="PTHR46323:SF2">
    <property type="entry name" value="BETA-GALACTOSIDASE"/>
    <property type="match status" value="1"/>
</dbReference>
<dbReference type="Pfam" id="PF02929">
    <property type="entry name" value="Bgal_small_N"/>
    <property type="match status" value="1"/>
</dbReference>
<dbReference type="Pfam" id="PF00703">
    <property type="entry name" value="Glyco_hydro_2"/>
    <property type="match status" value="1"/>
</dbReference>
<dbReference type="Pfam" id="PF02836">
    <property type="entry name" value="Glyco_hydro_2_C"/>
    <property type="match status" value="1"/>
</dbReference>
<dbReference type="Pfam" id="PF02837">
    <property type="entry name" value="Glyco_hydro_2_N"/>
    <property type="match status" value="1"/>
</dbReference>
<dbReference type="Pfam" id="PF16353">
    <property type="entry name" value="LacZ_4"/>
    <property type="match status" value="1"/>
</dbReference>
<dbReference type="PRINTS" id="PR00132">
    <property type="entry name" value="GLHYDRLASE2"/>
</dbReference>
<dbReference type="SMART" id="SM01038">
    <property type="entry name" value="Bgal_small_N"/>
    <property type="match status" value="1"/>
</dbReference>
<dbReference type="SUPFAM" id="SSF51445">
    <property type="entry name" value="(Trans)glycosidases"/>
    <property type="match status" value="1"/>
</dbReference>
<dbReference type="SUPFAM" id="SSF49303">
    <property type="entry name" value="beta-Galactosidase/glucuronidase domain"/>
    <property type="match status" value="2"/>
</dbReference>
<dbReference type="SUPFAM" id="SSF74650">
    <property type="entry name" value="Galactose mutarotase-like"/>
    <property type="match status" value="1"/>
</dbReference>
<dbReference type="SUPFAM" id="SSF49785">
    <property type="entry name" value="Galactose-binding domain-like"/>
    <property type="match status" value="1"/>
</dbReference>
<dbReference type="PROSITE" id="PS00719">
    <property type="entry name" value="GLYCOSYL_HYDROL_F2_1"/>
    <property type="match status" value="1"/>
</dbReference>
<dbReference type="PROSITE" id="PS00608">
    <property type="entry name" value="GLYCOSYL_HYDROL_F2_2"/>
    <property type="match status" value="1"/>
</dbReference>
<sequence length="897" mass="105020">MINNKPSLDWLENPEIFRVNRIDAHSDTWFYEKFEDVKLEDTMPLKQNLNGKWRFSYSENSSLRIKEFYKDEFDVSWIDYIEVPGHIQLQGYDKCQYINTMYPWEGHDELRPPHISKTYNPVGSYVTFFEVKDELKNKQTFISFQGVETAFYVWVNGEFVGYSEDTFTPSEFDITDYLREGENKLAVEVYKRSSASWIEDQDFWRFSGIFRDVYLYAVPETHVNDIFIKTDLYDDFKNAKLNAELKMIGNSETTVETYLEDKEGNKIAISEKIPFSDELTLYLDAQNINLWSAEEPNLYTLYILVNKKDGNLIEVVTQKIGFRHFEMKDKIMCLKWKRIIFKGVNRHEFSARRGRSITKEDMLWDIKFLKQHNINAVRTSHYPNQSLWYRLCDEYGIYLIDETNLESHGSWQKMGQIEPSWNVPGSLPQWQAAVLDRASSMVERDKNHPSVLIWSCGNESYAGEDIYQMSKYFRKKDPSRLVHYEGVTRCREFMTRRHESRMYAKAAEIEEYLNDNPKKPYISCEYMHSMGNSTGGMMKYTELEDKYLMYQGGFIWDYGDQALYRKLPDGKEVLAYGGDFTDRPTDYNFSGNGLIYADRTISPKAQEVKYLYQNVKLEPDEKGVTIKNQNLFVNTDKYDLYYIVERDGKLIKDGYLNVSVAPDEEKYIELPIGNYNFPEEIVLTTSLRLAQATLWAEKGYEIAFGQKVIKEKSDMNNHNSESKMKIIHGDVNIGVHGKDFKAIFSKQEGGIVSLRYNNKEFITRTPKTFYWRATTDNDRGNRHEFRCSQWLAATMGQKYVDFSVEEFDEKITLYYTYQLPTVPSTNVKITYEVSGEGIIKVNVKYKGVSGLPELPVLGMDFKLLAEFNSFSWYGMGPEENYIDRCEGAKLGIYESTQ</sequence>
<feature type="chain" id="PRO_0000057660" description="Beta-galactosidase">
    <location>
        <begin position="1"/>
        <end position="897"/>
    </location>
</feature>
<feature type="active site" description="Proton donor" evidence="1">
    <location>
        <position position="459"/>
    </location>
</feature>
<feature type="active site" description="Nucleophile" evidence="1">
    <location>
        <position position="525"/>
    </location>
</feature>
<reference key="1">
    <citation type="journal article" date="1991" name="J. Bacteriol.">
        <title>Expression and nucleotide sequence of the Clostridium acetobutylicum beta-galactosidase gene cloned in Escherichia coli.</title>
        <authorList>
            <person name="Hancock K.R."/>
            <person name="Rockman E."/>
            <person name="Young C.A."/>
            <person name="Pearce L."/>
            <person name="Maddox I.S."/>
            <person name="Scott D.B."/>
        </authorList>
    </citation>
    <scope>NUCLEOTIDE SEQUENCE [GENOMIC DNA]</scope>
    <source>
        <strain>DSM 1732 / NCIMB 2951 / Weizman</strain>
    </source>
</reference>
<keyword id="KW-0326">Glycosidase</keyword>
<keyword id="KW-0378">Hydrolase</keyword>
<accession>P24131</accession>
<proteinExistence type="evidence at transcript level"/>
<name>BGAL_CLOAT</name>
<gene>
    <name type="primary">cbgA</name>
</gene>